<comment type="catalytic activity">
    <reaction evidence="1">
        <text>(S)-4-hydroxy-2-oxopentanoate = acetaldehyde + pyruvate</text>
        <dbReference type="Rhea" id="RHEA:22624"/>
        <dbReference type="ChEBI" id="CHEBI:15343"/>
        <dbReference type="ChEBI" id="CHEBI:15361"/>
        <dbReference type="ChEBI" id="CHEBI:73143"/>
        <dbReference type="EC" id="4.1.3.39"/>
    </reaction>
</comment>
<comment type="similarity">
    <text evidence="1">Belongs to the 4-hydroxy-2-oxovalerate aldolase family.</text>
</comment>
<keyword id="KW-0058">Aromatic hydrocarbons catabolism</keyword>
<keyword id="KW-0456">Lyase</keyword>
<keyword id="KW-0464">Manganese</keyword>
<keyword id="KW-0479">Metal-binding</keyword>
<keyword id="KW-1185">Reference proteome</keyword>
<evidence type="ECO:0000255" key="1">
    <source>
        <dbReference type="HAMAP-Rule" id="MF_01656"/>
    </source>
</evidence>
<organism>
    <name type="scientific">Paraburkholderia xenovorans (strain LB400)</name>
    <dbReference type="NCBI Taxonomy" id="266265"/>
    <lineage>
        <taxon>Bacteria</taxon>
        <taxon>Pseudomonadati</taxon>
        <taxon>Pseudomonadota</taxon>
        <taxon>Betaproteobacteria</taxon>
        <taxon>Burkholderiales</taxon>
        <taxon>Burkholderiaceae</taxon>
        <taxon>Paraburkholderia</taxon>
    </lineage>
</organism>
<gene>
    <name type="ordered locus">Bxeno_B0695</name>
    <name type="ORF">Bxe_B2325</name>
</gene>
<proteinExistence type="inferred from homology"/>
<protein>
    <recommendedName>
        <fullName evidence="1">4-hydroxy-2-oxovalerate aldolase 3</fullName>
        <shortName evidence="1">HOA 3</shortName>
        <ecNumber evidence="1">4.1.3.39</ecNumber>
    </recommendedName>
    <alternativeName>
        <fullName evidence="1">4-hydroxy-2-keto-pentanoic acid aldolase 3</fullName>
    </alternativeName>
    <alternativeName>
        <fullName evidence="1">4-hydroxy-2-oxopentanoate aldolase 3</fullName>
    </alternativeName>
</protein>
<sequence>MDRKLYISDVTLRDGSHAIRHQYSIDNVQQIARALDSAKVDSIEVAHGDGLQGSSFNYGFGAHSDLEWIEAVADVVGHAQIATLLLPGIGTIHDLKAAYQAGARIVRVATHCTEADISKQHIEYARELGMDTVGFLMMSHMTTPENLAVEAKKMESYGATCIYVVDSGGAMNMNDVRARFRALKAVLKPETKTGMHAHHNLSLGVANSLVAVEEGCDRIDASLAGMGAGAGNAPLEVFIAAAERAGWHHGTDLYTLMDAADDIVRPLQDRPVRVDRETLALGYAGVYSSFLRHSEVAAKKYGLKAVDILVELGKRRMVGGQEDMIVDVALDLKRAAGV</sequence>
<name>HOA3_PARXL</name>
<dbReference type="EC" id="4.1.3.39" evidence="1"/>
<dbReference type="EMBL" id="CP000271">
    <property type="protein sequence ID" value="ABE33663.1"/>
    <property type="molecule type" value="Genomic_DNA"/>
</dbReference>
<dbReference type="RefSeq" id="WP_011491023.1">
    <property type="nucleotide sequence ID" value="NC_007952.1"/>
</dbReference>
<dbReference type="SMR" id="Q13QH6"/>
<dbReference type="STRING" id="266265.Bxe_B2325"/>
<dbReference type="KEGG" id="bxb:DR64_4657"/>
<dbReference type="KEGG" id="bxe:Bxe_B2325"/>
<dbReference type="PATRIC" id="fig|266265.5.peg.5387"/>
<dbReference type="eggNOG" id="COG0119">
    <property type="taxonomic scope" value="Bacteria"/>
</dbReference>
<dbReference type="OrthoDB" id="9803573at2"/>
<dbReference type="Proteomes" id="UP000001817">
    <property type="component" value="Chromosome 2"/>
</dbReference>
<dbReference type="GO" id="GO:0003852">
    <property type="term" value="F:2-isopropylmalate synthase activity"/>
    <property type="evidence" value="ECO:0007669"/>
    <property type="project" value="TreeGrafter"/>
</dbReference>
<dbReference type="GO" id="GO:0008701">
    <property type="term" value="F:4-hydroxy-2-oxovalerate aldolase activity"/>
    <property type="evidence" value="ECO:0007669"/>
    <property type="project" value="UniProtKB-UniRule"/>
</dbReference>
<dbReference type="GO" id="GO:0030145">
    <property type="term" value="F:manganese ion binding"/>
    <property type="evidence" value="ECO:0007669"/>
    <property type="project" value="UniProtKB-UniRule"/>
</dbReference>
<dbReference type="GO" id="GO:0009056">
    <property type="term" value="P:catabolic process"/>
    <property type="evidence" value="ECO:0007669"/>
    <property type="project" value="UniProtKB-KW"/>
</dbReference>
<dbReference type="GO" id="GO:0009098">
    <property type="term" value="P:L-leucine biosynthetic process"/>
    <property type="evidence" value="ECO:0007669"/>
    <property type="project" value="TreeGrafter"/>
</dbReference>
<dbReference type="CDD" id="cd07943">
    <property type="entry name" value="DRE_TIM_HOA"/>
    <property type="match status" value="1"/>
</dbReference>
<dbReference type="FunFam" id="1.10.8.60:FF:000042">
    <property type="entry name" value="4-hydroxy-2-oxovalerate aldolase"/>
    <property type="match status" value="1"/>
</dbReference>
<dbReference type="FunFam" id="3.20.20.70:FF:000072">
    <property type="entry name" value="4-hydroxy-2-oxovalerate aldolase"/>
    <property type="match status" value="1"/>
</dbReference>
<dbReference type="Gene3D" id="1.10.8.60">
    <property type="match status" value="1"/>
</dbReference>
<dbReference type="Gene3D" id="3.20.20.70">
    <property type="entry name" value="Aldolase class I"/>
    <property type="match status" value="1"/>
</dbReference>
<dbReference type="HAMAP" id="MF_01656">
    <property type="entry name" value="HOA"/>
    <property type="match status" value="1"/>
</dbReference>
<dbReference type="InterPro" id="IPR050073">
    <property type="entry name" value="2-IPM_HCS-like"/>
</dbReference>
<dbReference type="InterPro" id="IPR017629">
    <property type="entry name" value="4OH_2_O-val_aldolase"/>
</dbReference>
<dbReference type="InterPro" id="IPR013785">
    <property type="entry name" value="Aldolase_TIM"/>
</dbReference>
<dbReference type="InterPro" id="IPR012425">
    <property type="entry name" value="DmpG_comm"/>
</dbReference>
<dbReference type="InterPro" id="IPR035685">
    <property type="entry name" value="DRE_TIM_HOA"/>
</dbReference>
<dbReference type="InterPro" id="IPR000891">
    <property type="entry name" value="PYR_CT"/>
</dbReference>
<dbReference type="NCBIfam" id="TIGR03217">
    <property type="entry name" value="4OH_2_O_val_ald"/>
    <property type="match status" value="1"/>
</dbReference>
<dbReference type="NCBIfam" id="NF006049">
    <property type="entry name" value="PRK08195.1"/>
    <property type="match status" value="1"/>
</dbReference>
<dbReference type="PANTHER" id="PTHR10277:SF9">
    <property type="entry name" value="2-ISOPROPYLMALATE SYNTHASE 1, CHLOROPLASTIC-RELATED"/>
    <property type="match status" value="1"/>
</dbReference>
<dbReference type="PANTHER" id="PTHR10277">
    <property type="entry name" value="HOMOCITRATE SYNTHASE-RELATED"/>
    <property type="match status" value="1"/>
</dbReference>
<dbReference type="Pfam" id="PF07836">
    <property type="entry name" value="DmpG_comm"/>
    <property type="match status" value="1"/>
</dbReference>
<dbReference type="Pfam" id="PF00682">
    <property type="entry name" value="HMGL-like"/>
    <property type="match status" value="1"/>
</dbReference>
<dbReference type="SUPFAM" id="SSF51569">
    <property type="entry name" value="Aldolase"/>
    <property type="match status" value="1"/>
</dbReference>
<dbReference type="SUPFAM" id="SSF89000">
    <property type="entry name" value="post-HMGL domain-like"/>
    <property type="match status" value="1"/>
</dbReference>
<dbReference type="PROSITE" id="PS50991">
    <property type="entry name" value="PYR_CT"/>
    <property type="match status" value="1"/>
</dbReference>
<reference key="1">
    <citation type="journal article" date="2006" name="Proc. Natl. Acad. Sci. U.S.A.">
        <title>Burkholderia xenovorans LB400 harbors a multi-replicon, 9.73-Mbp genome shaped for versatility.</title>
        <authorList>
            <person name="Chain P.S.G."/>
            <person name="Denef V.J."/>
            <person name="Konstantinidis K.T."/>
            <person name="Vergez L.M."/>
            <person name="Agullo L."/>
            <person name="Reyes V.L."/>
            <person name="Hauser L."/>
            <person name="Cordova M."/>
            <person name="Gomez L."/>
            <person name="Gonzalez M."/>
            <person name="Land M."/>
            <person name="Lao V."/>
            <person name="Larimer F."/>
            <person name="LiPuma J.J."/>
            <person name="Mahenthiralingam E."/>
            <person name="Malfatti S.A."/>
            <person name="Marx C.J."/>
            <person name="Parnell J.J."/>
            <person name="Ramette A."/>
            <person name="Richardson P."/>
            <person name="Seeger M."/>
            <person name="Smith D."/>
            <person name="Spilker T."/>
            <person name="Sul W.J."/>
            <person name="Tsoi T.V."/>
            <person name="Ulrich L.E."/>
            <person name="Zhulin I.B."/>
            <person name="Tiedje J.M."/>
        </authorList>
    </citation>
    <scope>NUCLEOTIDE SEQUENCE [LARGE SCALE GENOMIC DNA]</scope>
    <source>
        <strain>LB400</strain>
    </source>
</reference>
<accession>Q13QH6</accession>
<feature type="chain" id="PRO_0000337802" description="4-hydroxy-2-oxovalerate aldolase 3">
    <location>
        <begin position="1"/>
        <end position="338"/>
    </location>
</feature>
<feature type="domain" description="Pyruvate carboxyltransferase" evidence="1">
    <location>
        <begin position="5"/>
        <end position="257"/>
    </location>
</feature>
<feature type="active site" description="Proton acceptor" evidence="1">
    <location>
        <position position="17"/>
    </location>
</feature>
<feature type="binding site" evidence="1">
    <location>
        <begin position="13"/>
        <end position="14"/>
    </location>
    <ligand>
        <name>substrate</name>
    </ligand>
</feature>
<feature type="binding site" evidence="1">
    <location>
        <position position="14"/>
    </location>
    <ligand>
        <name>Mn(2+)</name>
        <dbReference type="ChEBI" id="CHEBI:29035"/>
    </ligand>
</feature>
<feature type="binding site" evidence="1">
    <location>
        <position position="167"/>
    </location>
    <ligand>
        <name>substrate</name>
    </ligand>
</feature>
<feature type="binding site" evidence="1">
    <location>
        <position position="196"/>
    </location>
    <ligand>
        <name>Mn(2+)</name>
        <dbReference type="ChEBI" id="CHEBI:29035"/>
    </ligand>
</feature>
<feature type="binding site" evidence="1">
    <location>
        <position position="196"/>
    </location>
    <ligand>
        <name>substrate</name>
    </ligand>
</feature>
<feature type="binding site" evidence="1">
    <location>
        <position position="198"/>
    </location>
    <ligand>
        <name>Mn(2+)</name>
        <dbReference type="ChEBI" id="CHEBI:29035"/>
    </ligand>
</feature>
<feature type="binding site" evidence="1">
    <location>
        <position position="287"/>
    </location>
    <ligand>
        <name>substrate</name>
    </ligand>
</feature>
<feature type="site" description="Transition state stabilizer" evidence="1">
    <location>
        <position position="13"/>
    </location>
</feature>